<reference key="1">
    <citation type="journal article" date="2006" name="Appl. Environ. Microbiol.">
        <title>Characterization of the terephthalate degradation genes of Comamonas sp. strain E6.</title>
        <authorList>
            <person name="Sasoh M."/>
            <person name="Masai E."/>
            <person name="Ishibashi S."/>
            <person name="Hara H."/>
            <person name="Kamimura N."/>
            <person name="Miyauchi K."/>
            <person name="Fukuda M."/>
        </authorList>
    </citation>
    <scope>NUCLEOTIDE SEQUENCE [GENOMIC DNA]</scope>
    <scope>FUNCTION AS A TEREPHTHALATE DIOXYGENASE</scope>
    <scope>FUNCTION IN TPA DEGRADATION</scope>
    <scope>SUBUNIT</scope>
    <scope>COFACTOR</scope>
    <source>
        <strain>E6</strain>
    </source>
</reference>
<reference key="2">
    <citation type="journal article" date="2008" name="Biosci. Biotechnol. Biochem.">
        <title>Enzymatic properties of terephthalate 1,2-dioxygenase of Comamonas sp. strain E6.</title>
        <authorList>
            <person name="Fukuhara Y."/>
            <person name="Kasai D."/>
            <person name="Katayama Y."/>
            <person name="Fukuda M."/>
            <person name="Masai E."/>
        </authorList>
    </citation>
    <scope>FUNCTION AS A TEREPHTHALATE DIOXYGENASE</scope>
    <scope>CATALYTIC ACTIVITY</scope>
    <scope>COFACTOR</scope>
    <scope>BIOPHYSICOCHEMICAL PROPERTIES</scope>
    <scope>SUBUNIT</scope>
    <scope>SUBSTRATE SPECIFICITY</scope>
    <source>
        <strain>E6</strain>
    </source>
</reference>
<evidence type="ECO:0000255" key="1">
    <source>
        <dbReference type="PROSITE-ProRule" id="PRU00465"/>
    </source>
</evidence>
<evidence type="ECO:0000255" key="2">
    <source>
        <dbReference type="PROSITE-ProRule" id="PRU00716"/>
    </source>
</evidence>
<evidence type="ECO:0000269" key="3">
    <source>
    </source>
</evidence>
<evidence type="ECO:0000269" key="4">
    <source>
    </source>
</evidence>
<evidence type="ECO:0000305" key="5"/>
<organism>
    <name type="scientific">Comamonas sp</name>
    <dbReference type="NCBI Taxonomy" id="34028"/>
    <lineage>
        <taxon>Bacteria</taxon>
        <taxon>Pseudomonadati</taxon>
        <taxon>Pseudomonadota</taxon>
        <taxon>Betaproteobacteria</taxon>
        <taxon>Burkholderiales</taxon>
        <taxon>Comamonadaceae</taxon>
        <taxon>Comamonas</taxon>
    </lineage>
</organism>
<keyword id="KW-0001">2Fe-2S</keyword>
<keyword id="KW-0223">Dioxygenase</keyword>
<keyword id="KW-0274">FAD</keyword>
<keyword id="KW-0285">Flavoprotein</keyword>
<keyword id="KW-0408">Iron</keyword>
<keyword id="KW-0411">Iron-sulfur</keyword>
<keyword id="KW-0479">Metal-binding</keyword>
<keyword id="KW-0520">NAD</keyword>
<keyword id="KW-0560">Oxidoreductase</keyword>
<sequence>MNHQIHIHDSDIAFPCAPGQSVLDAALQAGIELPYSCRKGSCGNCASALLDGNITSFNGMAVRSELCTSEQVLLCGCTAASDIRIQPSSFRRLDPEARKRFTAKVYSNTLAAPDVSLLRLRLPVGKRAKFEAGQYLLIHLDDGESRSYSMANPPHESDGITLHVRHVPGGRFSTIVQQLKSGDTLEIELPFGSIALKPDDTRPLICVAGGTGFAPIKSVLDDLAKRKVQRDITLIWGARNPSGLYLPSAIDKWRKTWPQFRYIAAITDLGNVPADAHAGRVDDALRTHFGNLHDHVVHCCGSPSLVQSVRTAASDMGLLAQNFHADVFATSPTGSH</sequence>
<protein>
    <recommendedName>
        <fullName>Terephthalate 1,2-dioxygenase, reductase component 1</fullName>
        <shortName>TPADO reductase component</shortName>
        <ecNumber evidence="4">1.14.12.15</ecNumber>
    </recommendedName>
    <alternativeName>
        <fullName>TER dioxygenase system</fullName>
        <shortName>TERDOS</shortName>
    </alternativeName>
</protein>
<feature type="chain" id="PRO_0000419000" description="Terephthalate 1,2-dioxygenase, reductase component 1">
    <location>
        <begin position="1"/>
        <end position="336"/>
    </location>
</feature>
<feature type="domain" description="2Fe-2S ferredoxin-type" evidence="1">
    <location>
        <begin position="3"/>
        <end position="91"/>
    </location>
</feature>
<feature type="domain" description="FAD-binding FR-type" evidence="2">
    <location>
        <begin position="98"/>
        <end position="197"/>
    </location>
</feature>
<feature type="binding site" evidence="5">
    <location>
        <position position="37"/>
    </location>
    <ligand>
        <name>[2Fe-2S] cluster</name>
        <dbReference type="ChEBI" id="CHEBI:190135"/>
    </ligand>
</feature>
<feature type="binding site" evidence="5">
    <location>
        <position position="42"/>
    </location>
    <ligand>
        <name>[2Fe-2S] cluster</name>
        <dbReference type="ChEBI" id="CHEBI:190135"/>
    </ligand>
</feature>
<feature type="binding site" evidence="5">
    <location>
        <position position="45"/>
    </location>
    <ligand>
        <name>[2Fe-2S] cluster</name>
        <dbReference type="ChEBI" id="CHEBI:190135"/>
    </ligand>
</feature>
<feature type="binding site" evidence="5">
    <location>
        <position position="75"/>
    </location>
    <ligand>
        <name>[2Fe-2S] cluster</name>
        <dbReference type="ChEBI" id="CHEBI:190135"/>
    </ligand>
</feature>
<dbReference type="EC" id="1.14.12.15" evidence="4"/>
<dbReference type="EMBL" id="AB238678">
    <property type="protein sequence ID" value="BAE47080.1"/>
    <property type="molecule type" value="Genomic_DNA"/>
</dbReference>
<dbReference type="SMR" id="Q3C1E0"/>
<dbReference type="GO" id="GO:0051537">
    <property type="term" value="F:2 iron, 2 sulfur cluster binding"/>
    <property type="evidence" value="ECO:0007669"/>
    <property type="project" value="UniProtKB-KW"/>
</dbReference>
<dbReference type="GO" id="GO:0071949">
    <property type="term" value="F:FAD binding"/>
    <property type="evidence" value="ECO:0000314"/>
    <property type="project" value="UniProtKB"/>
</dbReference>
<dbReference type="GO" id="GO:0046872">
    <property type="term" value="F:metal ion binding"/>
    <property type="evidence" value="ECO:0007669"/>
    <property type="project" value="UniProtKB-KW"/>
</dbReference>
<dbReference type="GO" id="GO:0070402">
    <property type="term" value="F:NADPH binding"/>
    <property type="evidence" value="ECO:0000314"/>
    <property type="project" value="UniProtKB"/>
</dbReference>
<dbReference type="GO" id="GO:0018628">
    <property type="term" value="F:terephthalate 1,2-dioxygenase activity"/>
    <property type="evidence" value="ECO:0000314"/>
    <property type="project" value="UniProtKB"/>
</dbReference>
<dbReference type="GO" id="GO:0018963">
    <property type="term" value="P:phthalate metabolic process"/>
    <property type="evidence" value="ECO:0000314"/>
    <property type="project" value="UniProtKB"/>
</dbReference>
<dbReference type="CDD" id="cd00207">
    <property type="entry name" value="fer2"/>
    <property type="match status" value="1"/>
</dbReference>
<dbReference type="CDD" id="cd06189">
    <property type="entry name" value="flavin_oxioreductase"/>
    <property type="match status" value="1"/>
</dbReference>
<dbReference type="FunFam" id="3.40.50.80:FF:000108">
    <property type="entry name" value="Terephthalate 1,2-dioxygenase, reductase component 2"/>
    <property type="match status" value="1"/>
</dbReference>
<dbReference type="Gene3D" id="3.10.20.30">
    <property type="match status" value="1"/>
</dbReference>
<dbReference type="Gene3D" id="3.40.50.80">
    <property type="entry name" value="Nucleotide-binding domain of ferredoxin-NADP reductase (FNR) module"/>
    <property type="match status" value="1"/>
</dbReference>
<dbReference type="Gene3D" id="2.40.30.10">
    <property type="entry name" value="Translation factors"/>
    <property type="match status" value="1"/>
</dbReference>
<dbReference type="InterPro" id="IPR036010">
    <property type="entry name" value="2Fe-2S_ferredoxin-like_sf"/>
</dbReference>
<dbReference type="InterPro" id="IPR001041">
    <property type="entry name" value="2Fe-2S_ferredoxin-type"/>
</dbReference>
<dbReference type="InterPro" id="IPR006058">
    <property type="entry name" value="2Fe2S_fd_BS"/>
</dbReference>
<dbReference type="InterPro" id="IPR012675">
    <property type="entry name" value="Beta-grasp_dom_sf"/>
</dbReference>
<dbReference type="InterPro" id="IPR008333">
    <property type="entry name" value="Cbr1-like_FAD-bd_dom"/>
</dbReference>
<dbReference type="InterPro" id="IPR017927">
    <property type="entry name" value="FAD-bd_FR_type"/>
</dbReference>
<dbReference type="InterPro" id="IPR001709">
    <property type="entry name" value="Flavoprot_Pyr_Nucl_cyt_Rdtase"/>
</dbReference>
<dbReference type="InterPro" id="IPR039261">
    <property type="entry name" value="FNR_nucleotide-bd"/>
</dbReference>
<dbReference type="InterPro" id="IPR050415">
    <property type="entry name" value="MRET"/>
</dbReference>
<dbReference type="InterPro" id="IPR001433">
    <property type="entry name" value="OxRdtase_FAD/NAD-bd"/>
</dbReference>
<dbReference type="InterPro" id="IPR017938">
    <property type="entry name" value="Riboflavin_synthase-like_b-brl"/>
</dbReference>
<dbReference type="PANTHER" id="PTHR47354">
    <property type="entry name" value="NADH OXIDOREDUCTASE HCR"/>
    <property type="match status" value="1"/>
</dbReference>
<dbReference type="PANTHER" id="PTHR47354:SF5">
    <property type="entry name" value="PROTEIN RFBI"/>
    <property type="match status" value="1"/>
</dbReference>
<dbReference type="Pfam" id="PF00970">
    <property type="entry name" value="FAD_binding_6"/>
    <property type="match status" value="1"/>
</dbReference>
<dbReference type="Pfam" id="PF00111">
    <property type="entry name" value="Fer2"/>
    <property type="match status" value="1"/>
</dbReference>
<dbReference type="Pfam" id="PF00175">
    <property type="entry name" value="NAD_binding_1"/>
    <property type="match status" value="1"/>
</dbReference>
<dbReference type="PRINTS" id="PR00371">
    <property type="entry name" value="FPNCR"/>
</dbReference>
<dbReference type="PRINTS" id="PR00410">
    <property type="entry name" value="PHEHYDRXLASE"/>
</dbReference>
<dbReference type="SUPFAM" id="SSF54292">
    <property type="entry name" value="2Fe-2S ferredoxin-like"/>
    <property type="match status" value="1"/>
</dbReference>
<dbReference type="SUPFAM" id="SSF52343">
    <property type="entry name" value="Ferredoxin reductase-like, C-terminal NADP-linked domain"/>
    <property type="match status" value="1"/>
</dbReference>
<dbReference type="SUPFAM" id="SSF63380">
    <property type="entry name" value="Riboflavin synthase domain-like"/>
    <property type="match status" value="1"/>
</dbReference>
<dbReference type="PROSITE" id="PS00197">
    <property type="entry name" value="2FE2S_FER_1"/>
    <property type="match status" value="1"/>
</dbReference>
<dbReference type="PROSITE" id="PS51085">
    <property type="entry name" value="2FE2S_FER_2"/>
    <property type="match status" value="1"/>
</dbReference>
<dbReference type="PROSITE" id="PS51384">
    <property type="entry name" value="FAD_FR"/>
    <property type="match status" value="1"/>
</dbReference>
<comment type="function">
    <text evidence="3 4">Component of the terephthalate 1,2-dioxygenase multicomponent enzyme system which catalyzes the dioxygenation of terephthalate (TER/TPA) to 1,2-dihydroxy-3,5-cyclohexadiene-1,4-dicarboxylic acid (DCD). TphA1 probably reduces TphA2A3. It can also use 2,5-dicarboxypyridine (PDC) and 1,4-napthalenedicarboxylic acid (NDC) as substrates, and preferentially uses NADPH which is the physiological electron donor.</text>
</comment>
<comment type="catalytic activity">
    <reaction evidence="4">
        <text>terephthalate + NADH + O2 + H(+) = (3S,4R)-3,4-dihydroxycyclohexa-1,5-diene-1,4-dicarboxylate + NAD(+)</text>
        <dbReference type="Rhea" id="RHEA:10312"/>
        <dbReference type="ChEBI" id="CHEBI:15378"/>
        <dbReference type="ChEBI" id="CHEBI:15379"/>
        <dbReference type="ChEBI" id="CHEBI:30043"/>
        <dbReference type="ChEBI" id="CHEBI:57412"/>
        <dbReference type="ChEBI" id="CHEBI:57540"/>
        <dbReference type="ChEBI" id="CHEBI:57945"/>
        <dbReference type="EC" id="1.14.12.15"/>
    </reaction>
</comment>
<comment type="cofactor">
    <cofactor>
        <name>FAD</name>
        <dbReference type="ChEBI" id="CHEBI:57692"/>
    </cofactor>
    <text>Binds 1 FAD per subunit.</text>
</comment>
<comment type="cofactor">
    <cofactor evidence="5">
        <name>[2Fe-2S] cluster</name>
        <dbReference type="ChEBI" id="CHEBI:190135"/>
    </cofactor>
    <text evidence="5">Binds 1 [2Fe-2S] cluster per subunit.</text>
</comment>
<comment type="biophysicochemical properties">
    <kinetics>
        <KM evidence="4">10 uM for NADP (at 30 degrees Celsius and at ph 7)</KM>
        <KM evidence="4">51 uM for NAD (at 30 degrees Celsius and at ph 7)</KM>
        <KM evidence="4">72 uM for TPA (at 30 degrees Celsius and at ph 7)</KM>
        <Vmax evidence="4">9.87 umol/min/mg enzyme with TPA as substrate (at 30 degrees Celsius and at ph 7)</Vmax>
        <Vmax evidence="4">131.0 umol/min/mg enzyme with NAD as substrate (at 30 degrees Celsius and at ph 7)</Vmax>
        <Vmax evidence="4">199.0 umol/min/mg enzyme with NADP as substrate (at 30 degrees Celsius and at ph 7)</Vmax>
    </kinetics>
    <phDependence>
        <text evidence="4">Optimum pH is 7. About 20% of maximum TPADO activity is observed at pH 9, whereas no activity is observed at pH 5.</text>
    </phDependence>
    <temperatureDependence>
        <text evidence="4">Optimum temperature is 30 degrees Celsius. Approximately 60% of maximum TPADO activity is observed at 15 degrees Celsius, and activity is completely lost at 50 degrees Celsius.</text>
    </temperatureDependence>
</comment>
<comment type="subunit">
    <text evidence="3 4">Monomer. Part of a multicomponent enzyme system composed of a reductase (TphA1I or TphA1II) and a two-subunit oxygenase component (TphA2I or TphA2II and TphA3I or TphA3II).</text>
</comment>
<accession>Q3C1E0</accession>
<proteinExistence type="evidence at protein level"/>
<gene>
    <name type="primary">tphA1I</name>
</gene>
<name>TPDR1_COMSP</name>